<name>RNFA_YERPE</name>
<organism>
    <name type="scientific">Yersinia pestis</name>
    <dbReference type="NCBI Taxonomy" id="632"/>
    <lineage>
        <taxon>Bacteria</taxon>
        <taxon>Pseudomonadati</taxon>
        <taxon>Pseudomonadota</taxon>
        <taxon>Gammaproteobacteria</taxon>
        <taxon>Enterobacterales</taxon>
        <taxon>Yersiniaceae</taxon>
        <taxon>Yersinia</taxon>
    </lineage>
</organism>
<protein>
    <recommendedName>
        <fullName evidence="1">Ion-translocating oxidoreductase complex subunit A</fullName>
        <ecNumber evidence="1">7.-.-.-</ecNumber>
    </recommendedName>
    <alternativeName>
        <fullName evidence="1">Rnf electron transport complex subunit A</fullName>
    </alternativeName>
</protein>
<accession>Q8ZEC8</accession>
<accession>Q0WES1</accession>
<comment type="function">
    <text evidence="1">Part of a membrane-bound complex that couples electron transfer with translocation of ions across the membrane.</text>
</comment>
<comment type="subunit">
    <text evidence="1">The complex is composed of six subunits: RnfA, RnfB, RnfC, RnfD, RnfE and RnfG.</text>
</comment>
<comment type="subcellular location">
    <subcellularLocation>
        <location evidence="1">Cell inner membrane</location>
        <topology evidence="1">Multi-pass membrane protein</topology>
    </subcellularLocation>
</comment>
<comment type="similarity">
    <text evidence="1">Belongs to the NqrDE/RnfAE family.</text>
</comment>
<comment type="sequence caution" evidence="2">
    <conflict type="erroneous initiation">
        <sequence resource="EMBL-CDS" id="AAM85651"/>
    </conflict>
</comment>
<comment type="sequence caution" evidence="2">
    <conflict type="erroneous initiation">
        <sequence resource="EMBL-CDS" id="AAS62260"/>
    </conflict>
</comment>
<gene>
    <name evidence="1" type="primary">rnfA</name>
    <name type="ordered locus">YPO2246</name>
    <name type="ordered locus">y2087</name>
    <name type="ordered locus">YP_2044</name>
</gene>
<evidence type="ECO:0000255" key="1">
    <source>
        <dbReference type="HAMAP-Rule" id="MF_00459"/>
    </source>
</evidence>
<evidence type="ECO:0000305" key="2"/>
<sequence>MTEYLLLFVGTVLVNNFVLVKFLGLCPFMGVSKKLETAIGMGLATTFVLTLASVCAWMVNSFILLPLGLIYLRTLAFILVIAVVVQFTELVVRKTSPTLYRLLGIFLPLITTNCAVLGVALLNVNQSHNFMQSAVYGFSAAAGFSLVMVLFAAIRERLAVADVPAPFRGSSIALITAGLMSLAFMGFTGLVKF</sequence>
<feature type="chain" id="PRO_0000214303" description="Ion-translocating oxidoreductase complex subunit A">
    <location>
        <begin position="1"/>
        <end position="193"/>
    </location>
</feature>
<feature type="transmembrane region" description="Helical" evidence="1">
    <location>
        <begin position="5"/>
        <end position="25"/>
    </location>
</feature>
<feature type="transmembrane region" description="Helical" evidence="1">
    <location>
        <begin position="39"/>
        <end position="59"/>
    </location>
</feature>
<feature type="transmembrane region" description="Helical" evidence="1">
    <location>
        <begin position="62"/>
        <end position="82"/>
    </location>
</feature>
<feature type="transmembrane region" description="Helical" evidence="1">
    <location>
        <begin position="102"/>
        <end position="122"/>
    </location>
</feature>
<feature type="transmembrane region" description="Helical" evidence="1">
    <location>
        <begin position="134"/>
        <end position="154"/>
    </location>
</feature>
<feature type="transmembrane region" description="Helical" evidence="1">
    <location>
        <begin position="171"/>
        <end position="191"/>
    </location>
</feature>
<reference key="1">
    <citation type="journal article" date="2001" name="Nature">
        <title>Genome sequence of Yersinia pestis, the causative agent of plague.</title>
        <authorList>
            <person name="Parkhill J."/>
            <person name="Wren B.W."/>
            <person name="Thomson N.R."/>
            <person name="Titball R.W."/>
            <person name="Holden M.T.G."/>
            <person name="Prentice M.B."/>
            <person name="Sebaihia M."/>
            <person name="James K.D."/>
            <person name="Churcher C.M."/>
            <person name="Mungall K.L."/>
            <person name="Baker S."/>
            <person name="Basham D."/>
            <person name="Bentley S.D."/>
            <person name="Brooks K."/>
            <person name="Cerdeno-Tarraga A.-M."/>
            <person name="Chillingworth T."/>
            <person name="Cronin A."/>
            <person name="Davies R.M."/>
            <person name="Davis P."/>
            <person name="Dougan G."/>
            <person name="Feltwell T."/>
            <person name="Hamlin N."/>
            <person name="Holroyd S."/>
            <person name="Jagels K."/>
            <person name="Karlyshev A.V."/>
            <person name="Leather S."/>
            <person name="Moule S."/>
            <person name="Oyston P.C.F."/>
            <person name="Quail M.A."/>
            <person name="Rutherford K.M."/>
            <person name="Simmonds M."/>
            <person name="Skelton J."/>
            <person name="Stevens K."/>
            <person name="Whitehead S."/>
            <person name="Barrell B.G."/>
        </authorList>
    </citation>
    <scope>NUCLEOTIDE SEQUENCE [LARGE SCALE GENOMIC DNA]</scope>
    <source>
        <strain>CO-92 / Biovar Orientalis</strain>
    </source>
</reference>
<reference key="2">
    <citation type="journal article" date="2002" name="J. Bacteriol.">
        <title>Genome sequence of Yersinia pestis KIM.</title>
        <authorList>
            <person name="Deng W."/>
            <person name="Burland V."/>
            <person name="Plunkett G. III"/>
            <person name="Boutin A."/>
            <person name="Mayhew G.F."/>
            <person name="Liss P."/>
            <person name="Perna N.T."/>
            <person name="Rose D.J."/>
            <person name="Mau B."/>
            <person name="Zhou S."/>
            <person name="Schwartz D.C."/>
            <person name="Fetherston J.D."/>
            <person name="Lindler L.E."/>
            <person name="Brubaker R.R."/>
            <person name="Plano G.V."/>
            <person name="Straley S.C."/>
            <person name="McDonough K.A."/>
            <person name="Nilles M.L."/>
            <person name="Matson J.S."/>
            <person name="Blattner F.R."/>
            <person name="Perry R.D."/>
        </authorList>
    </citation>
    <scope>NUCLEOTIDE SEQUENCE [LARGE SCALE GENOMIC DNA]</scope>
    <source>
        <strain>KIM10+ / Biovar Mediaevalis</strain>
    </source>
</reference>
<reference key="3">
    <citation type="journal article" date="2004" name="DNA Res.">
        <title>Complete genome sequence of Yersinia pestis strain 91001, an isolate avirulent to humans.</title>
        <authorList>
            <person name="Song Y."/>
            <person name="Tong Z."/>
            <person name="Wang J."/>
            <person name="Wang L."/>
            <person name="Guo Z."/>
            <person name="Han Y."/>
            <person name="Zhang J."/>
            <person name="Pei D."/>
            <person name="Zhou D."/>
            <person name="Qin H."/>
            <person name="Pang X."/>
            <person name="Han Y."/>
            <person name="Zhai J."/>
            <person name="Li M."/>
            <person name="Cui B."/>
            <person name="Qi Z."/>
            <person name="Jin L."/>
            <person name="Dai R."/>
            <person name="Chen F."/>
            <person name="Li S."/>
            <person name="Ye C."/>
            <person name="Du Z."/>
            <person name="Lin W."/>
            <person name="Wang J."/>
            <person name="Yu J."/>
            <person name="Yang H."/>
            <person name="Wang J."/>
            <person name="Huang P."/>
            <person name="Yang R."/>
        </authorList>
    </citation>
    <scope>NUCLEOTIDE SEQUENCE [LARGE SCALE GENOMIC DNA]</scope>
    <source>
        <strain>91001 / Biovar Mediaevalis</strain>
    </source>
</reference>
<proteinExistence type="inferred from homology"/>
<keyword id="KW-0997">Cell inner membrane</keyword>
<keyword id="KW-1003">Cell membrane</keyword>
<keyword id="KW-0249">Electron transport</keyword>
<keyword id="KW-0472">Membrane</keyword>
<keyword id="KW-1185">Reference proteome</keyword>
<keyword id="KW-1278">Translocase</keyword>
<keyword id="KW-0812">Transmembrane</keyword>
<keyword id="KW-1133">Transmembrane helix</keyword>
<keyword id="KW-0813">Transport</keyword>
<dbReference type="EC" id="7.-.-.-" evidence="1"/>
<dbReference type="EMBL" id="AL590842">
    <property type="protein sequence ID" value="CAL20875.1"/>
    <property type="molecule type" value="Genomic_DNA"/>
</dbReference>
<dbReference type="EMBL" id="AE009952">
    <property type="protein sequence ID" value="AAM85651.1"/>
    <property type="status" value="ALT_INIT"/>
    <property type="molecule type" value="Genomic_DNA"/>
</dbReference>
<dbReference type="EMBL" id="AE017042">
    <property type="protein sequence ID" value="AAS62260.1"/>
    <property type="status" value="ALT_INIT"/>
    <property type="molecule type" value="Genomic_DNA"/>
</dbReference>
<dbReference type="PIR" id="AH0273">
    <property type="entry name" value="AH0273"/>
</dbReference>
<dbReference type="RefSeq" id="YP_002347217.1">
    <property type="nucleotide sequence ID" value="NC_003143.1"/>
</dbReference>
<dbReference type="SMR" id="Q8ZEC8"/>
<dbReference type="IntAct" id="Q8ZEC8">
    <property type="interactions" value="1"/>
</dbReference>
<dbReference type="STRING" id="214092.YPO2246"/>
<dbReference type="PaxDb" id="214092-YPO2246"/>
<dbReference type="EnsemblBacteria" id="AAS62260">
    <property type="protein sequence ID" value="AAS62260"/>
    <property type="gene ID" value="YP_2044"/>
</dbReference>
<dbReference type="KEGG" id="ype:YPO2246"/>
<dbReference type="KEGG" id="ypk:y2087"/>
<dbReference type="KEGG" id="ypm:YP_2044"/>
<dbReference type="PATRIC" id="fig|214092.21.peg.2641"/>
<dbReference type="eggNOG" id="COG4657">
    <property type="taxonomic scope" value="Bacteria"/>
</dbReference>
<dbReference type="HOGENOM" id="CLU_095255_1_0_6"/>
<dbReference type="OMA" id="ILGLCPF"/>
<dbReference type="OrthoDB" id="9803631at2"/>
<dbReference type="Proteomes" id="UP000000815">
    <property type="component" value="Chromosome"/>
</dbReference>
<dbReference type="Proteomes" id="UP000001019">
    <property type="component" value="Chromosome"/>
</dbReference>
<dbReference type="Proteomes" id="UP000002490">
    <property type="component" value="Chromosome"/>
</dbReference>
<dbReference type="GO" id="GO:0005886">
    <property type="term" value="C:plasma membrane"/>
    <property type="evidence" value="ECO:0000318"/>
    <property type="project" value="GO_Central"/>
</dbReference>
<dbReference type="GO" id="GO:0022900">
    <property type="term" value="P:electron transport chain"/>
    <property type="evidence" value="ECO:0007669"/>
    <property type="project" value="UniProtKB-UniRule"/>
</dbReference>
<dbReference type="HAMAP" id="MF_00459">
    <property type="entry name" value="RsxA_RnfA"/>
    <property type="match status" value="1"/>
</dbReference>
<dbReference type="InterPro" id="IPR011293">
    <property type="entry name" value="Ion_transpt_RnfA/RsxA"/>
</dbReference>
<dbReference type="InterPro" id="IPR003667">
    <property type="entry name" value="NqrDE/RnfAE"/>
</dbReference>
<dbReference type="InterPro" id="IPR050133">
    <property type="entry name" value="NqrDE/RnfAE_oxidrdctase"/>
</dbReference>
<dbReference type="NCBIfam" id="NF003481">
    <property type="entry name" value="PRK05151.1"/>
    <property type="match status" value="1"/>
</dbReference>
<dbReference type="NCBIfam" id="TIGR01943">
    <property type="entry name" value="rnfA"/>
    <property type="match status" value="1"/>
</dbReference>
<dbReference type="PANTHER" id="PTHR30335">
    <property type="entry name" value="INTEGRAL MEMBRANE PROTEIN OF SOXR-REDUCING COMPLEX"/>
    <property type="match status" value="1"/>
</dbReference>
<dbReference type="PANTHER" id="PTHR30335:SF0">
    <property type="entry name" value="ION-TRANSLOCATING OXIDOREDUCTASE COMPLEX SUBUNIT A"/>
    <property type="match status" value="1"/>
</dbReference>
<dbReference type="Pfam" id="PF02508">
    <property type="entry name" value="Rnf-Nqr"/>
    <property type="match status" value="1"/>
</dbReference>
<dbReference type="PIRSF" id="PIRSF006102">
    <property type="entry name" value="NQR_DE"/>
    <property type="match status" value="1"/>
</dbReference>